<gene>
    <name evidence="10 15" type="primary">FAAP20</name>
    <name type="synonym">C1orf86</name>
    <name type="ORF">FP7162</name>
</gene>
<keyword id="KW-0002">3D-structure</keyword>
<keyword id="KW-0025">Alternative splicing</keyword>
<keyword id="KW-0158">Chromosome</keyword>
<keyword id="KW-0227">DNA damage</keyword>
<keyword id="KW-0234">DNA repair</keyword>
<keyword id="KW-0479">Metal-binding</keyword>
<keyword id="KW-0539">Nucleus</keyword>
<keyword id="KW-0597">Phosphoprotein</keyword>
<keyword id="KW-1267">Proteomics identification</keyword>
<keyword id="KW-1185">Reference proteome</keyword>
<keyword id="KW-0862">Zinc</keyword>
<keyword id="KW-0863">Zinc-finger</keyword>
<evidence type="ECO:0000255" key="1">
    <source>
        <dbReference type="PROSITE-ProRule" id="PRU01254"/>
    </source>
</evidence>
<evidence type="ECO:0000256" key="2">
    <source>
        <dbReference type="SAM" id="MobiDB-lite"/>
    </source>
</evidence>
<evidence type="ECO:0000269" key="3">
    <source>
    </source>
</evidence>
<evidence type="ECO:0000269" key="4">
    <source>
    </source>
</evidence>
<evidence type="ECO:0000269" key="5">
    <source>
    </source>
</evidence>
<evidence type="ECO:0000269" key="6">
    <source>
    </source>
</evidence>
<evidence type="ECO:0000303" key="7">
    <source>
    </source>
</evidence>
<evidence type="ECO:0000303" key="8">
    <source>
    </source>
</evidence>
<evidence type="ECO:0000303" key="9">
    <source>
    </source>
</evidence>
<evidence type="ECO:0000303" key="10">
    <source>
    </source>
</evidence>
<evidence type="ECO:0000305" key="11"/>
<evidence type="ECO:0000305" key="12">
    <source>
    </source>
</evidence>
<evidence type="ECO:0000305" key="13">
    <source>
    </source>
</evidence>
<evidence type="ECO:0000305" key="14">
    <source>
    </source>
</evidence>
<evidence type="ECO:0000312" key="15">
    <source>
        <dbReference type="HGNC" id="HGNC:26428"/>
    </source>
</evidence>
<evidence type="ECO:0007744" key="16">
    <source>
    </source>
</evidence>
<evidence type="ECO:0007829" key="17">
    <source>
        <dbReference type="PDB" id="2MUQ"/>
    </source>
</evidence>
<evidence type="ECO:0007829" key="18">
    <source>
        <dbReference type="PDB" id="3WWQ"/>
    </source>
</evidence>
<sequence>MEAARRPRLGLSRRRPRPAGGPSGGRPWFLLGGDERERLWAELLRTVSPELILDHEVPSLPAFPGQEPRCGPEPTEVFTVGPKTFSWTPFPPDLWGPGRSYRLLHGAGGHLESPARSLPQRPAPDPCRAPRVEQQPSVEGAAALRSCPMCQKEFAPRLTQLDVDSHLAQCLAESTEDVTW</sequence>
<dbReference type="EMBL" id="AK055593">
    <property type="protein sequence ID" value="BAB70965.1"/>
    <property type="molecule type" value="mRNA"/>
</dbReference>
<dbReference type="EMBL" id="AK126870">
    <property type="protein sequence ID" value="BAC86730.1"/>
    <property type="molecule type" value="mRNA"/>
</dbReference>
<dbReference type="EMBL" id="AF461903">
    <property type="protein sequence ID" value="AAQ04817.1"/>
    <property type="molecule type" value="mRNA"/>
</dbReference>
<dbReference type="EMBL" id="AL590822">
    <property type="status" value="NOT_ANNOTATED_CDS"/>
    <property type="molecule type" value="Genomic_DNA"/>
</dbReference>
<dbReference type="EMBL" id="CH471183">
    <property type="protein sequence ID" value="EAW56125.1"/>
    <property type="molecule type" value="Genomic_DNA"/>
</dbReference>
<dbReference type="EMBL" id="BC066360">
    <property type="protein sequence ID" value="AAH66360.1"/>
    <property type="status" value="ALT_INIT"/>
    <property type="molecule type" value="mRNA"/>
</dbReference>
<dbReference type="EMBL" id="BC078145">
    <property type="status" value="NOT_ANNOTATED_CDS"/>
    <property type="molecule type" value="mRNA"/>
</dbReference>
<dbReference type="EMBL" id="BC103992">
    <property type="protein sequence ID" value="AAI03993.1"/>
    <property type="molecule type" value="mRNA"/>
</dbReference>
<dbReference type="CCDS" id="CCDS38.2">
    <molecule id="Q6NZ36-1"/>
</dbReference>
<dbReference type="CCDS" id="CCDS57965.1">
    <molecule id="Q6NZ36-6"/>
</dbReference>
<dbReference type="CCDS" id="CCDS72687.1">
    <molecule id="Q6NZ36-5"/>
</dbReference>
<dbReference type="RefSeq" id="NP_001243874.1">
    <property type="nucleotide sequence ID" value="NM_001256945.1"/>
</dbReference>
<dbReference type="RefSeq" id="NP_001243875.1">
    <property type="nucleotide sequence ID" value="NM_001256946.1"/>
</dbReference>
<dbReference type="RefSeq" id="NP_001243876.2">
    <molecule id="Q6NZ36-6"/>
    <property type="nucleotide sequence ID" value="NM_001256947.2"/>
</dbReference>
<dbReference type="RefSeq" id="NP_001269599.1">
    <molecule id="Q6NZ36-2"/>
    <property type="nucleotide sequence ID" value="NM_001282670.2"/>
</dbReference>
<dbReference type="RefSeq" id="NP_001269600.1">
    <property type="nucleotide sequence ID" value="NM_001282671.1"/>
</dbReference>
<dbReference type="RefSeq" id="NP_001269601.1">
    <property type="nucleotide sequence ID" value="NM_001282672.1"/>
</dbReference>
<dbReference type="RefSeq" id="NP_001269602.2">
    <molecule id="Q6NZ36-5"/>
    <property type="nucleotide sequence ID" value="NM_001282673.2"/>
</dbReference>
<dbReference type="RefSeq" id="NP_872339.3">
    <molecule id="Q6NZ36-1"/>
    <property type="nucleotide sequence ID" value="NM_182533.4"/>
</dbReference>
<dbReference type="PDB" id="2MUQ">
    <property type="method" value="NMR"/>
    <property type="chains" value="A=140-180"/>
</dbReference>
<dbReference type="PDB" id="2MUR">
    <property type="method" value="NMR"/>
    <property type="chains" value="A=140-180"/>
</dbReference>
<dbReference type="PDB" id="3WWQ">
    <property type="method" value="X-ray"/>
    <property type="resolution" value="1.90 A"/>
    <property type="chains" value="C/F/I/L=142-180"/>
</dbReference>
<dbReference type="PDBsum" id="2MUQ"/>
<dbReference type="PDBsum" id="2MUR"/>
<dbReference type="PDBsum" id="3WWQ"/>
<dbReference type="SMR" id="Q6NZ36"/>
<dbReference type="BioGRID" id="128288">
    <property type="interactions" value="76"/>
</dbReference>
<dbReference type="ComplexPortal" id="CPX-6263">
    <property type="entry name" value="Fanconi anemia ubiquitin ligase complex"/>
</dbReference>
<dbReference type="DIP" id="DIP-59917N"/>
<dbReference type="FunCoup" id="Q6NZ36">
    <property type="interactions" value="693"/>
</dbReference>
<dbReference type="IntAct" id="Q6NZ36">
    <property type="interactions" value="46"/>
</dbReference>
<dbReference type="MINT" id="Q6NZ36"/>
<dbReference type="iPTMnet" id="Q6NZ36"/>
<dbReference type="BioMuta" id="FAAP20"/>
<dbReference type="DMDM" id="166991449"/>
<dbReference type="jPOST" id="Q6NZ36"/>
<dbReference type="MassIVE" id="Q6NZ36"/>
<dbReference type="PeptideAtlas" id="Q6NZ36"/>
<dbReference type="ProteomicsDB" id="23749"/>
<dbReference type="ProteomicsDB" id="66786">
    <molecule id="Q6NZ36-1"/>
</dbReference>
<dbReference type="ProteomicsDB" id="66787">
    <molecule id="Q6NZ36-2"/>
</dbReference>
<dbReference type="ProteomicsDB" id="66788">
    <molecule id="Q6NZ36-3"/>
</dbReference>
<dbReference type="ProteomicsDB" id="66789">
    <molecule id="Q6NZ36-4"/>
</dbReference>
<dbReference type="ProteomicsDB" id="66790">
    <molecule id="Q6NZ36-5"/>
</dbReference>
<dbReference type="Pumba" id="Q6NZ36"/>
<dbReference type="Antibodypedia" id="52488">
    <property type="antibodies" value="51 antibodies from 13 providers"/>
</dbReference>
<dbReference type="DNASU" id="199990"/>
<dbReference type="Ensembl" id="ENST00000378543.2">
    <molecule id="Q6NZ36-6"/>
    <property type="protein sequence ID" value="ENSP00000367804.2"/>
    <property type="gene ID" value="ENSG00000162585.17"/>
</dbReference>
<dbReference type="Ensembl" id="ENST00000378546.9">
    <molecule id="Q6NZ36-1"/>
    <property type="protein sequence ID" value="ENSP00000367808.4"/>
    <property type="gene ID" value="ENSG00000162585.17"/>
</dbReference>
<dbReference type="Ensembl" id="ENST00000400918.7">
    <molecule id="Q6NZ36-5"/>
    <property type="protein sequence ID" value="ENSP00000383709.3"/>
    <property type="gene ID" value="ENSG00000162585.17"/>
</dbReference>
<dbReference type="Ensembl" id="ENST00000414253.5">
    <molecule id="Q6NZ36-4"/>
    <property type="protein sequence ID" value="ENSP00000410450.1"/>
    <property type="gene ID" value="ENSG00000162585.17"/>
</dbReference>
<dbReference type="GeneID" id="199990"/>
<dbReference type="KEGG" id="hsa:199990"/>
<dbReference type="MANE-Select" id="ENST00000378546.9">
    <property type="protein sequence ID" value="ENSP00000367808.4"/>
    <property type="RefSeq nucleotide sequence ID" value="NM_182533.4"/>
    <property type="RefSeq protein sequence ID" value="NP_872339.3"/>
</dbReference>
<dbReference type="UCSC" id="uc001aiy.4">
    <molecule id="Q6NZ36-1"/>
    <property type="organism name" value="human"/>
</dbReference>
<dbReference type="AGR" id="HGNC:26428"/>
<dbReference type="CTD" id="199990"/>
<dbReference type="DisGeNET" id="199990"/>
<dbReference type="GeneCards" id="FAAP20"/>
<dbReference type="HGNC" id="HGNC:26428">
    <property type="gene designation" value="FAAP20"/>
</dbReference>
<dbReference type="HPA" id="ENSG00000162585">
    <property type="expression patterns" value="Low tissue specificity"/>
</dbReference>
<dbReference type="MIM" id="615183">
    <property type="type" value="gene"/>
</dbReference>
<dbReference type="neXtProt" id="NX_Q6NZ36"/>
<dbReference type="OpenTargets" id="ENSG00000162585"/>
<dbReference type="PharmGKB" id="PA142672470"/>
<dbReference type="VEuPathDB" id="HostDB:ENSG00000162585"/>
<dbReference type="GeneTree" id="ENSGT00390000010531"/>
<dbReference type="HOGENOM" id="CLU_2145000_0_0_1"/>
<dbReference type="InParanoid" id="Q6NZ36"/>
<dbReference type="OMA" id="GECARLW"/>
<dbReference type="OrthoDB" id="10063431at2759"/>
<dbReference type="PAN-GO" id="Q6NZ36">
    <property type="GO annotations" value="3 GO annotations based on evolutionary models"/>
</dbReference>
<dbReference type="PhylomeDB" id="Q6NZ36"/>
<dbReference type="TreeFam" id="TF336358"/>
<dbReference type="PathwayCommons" id="Q6NZ36"/>
<dbReference type="Reactome" id="R-HSA-6783310">
    <property type="pathway name" value="Fanconi Anemia Pathway"/>
</dbReference>
<dbReference type="Reactome" id="R-HSA-9833482">
    <property type="pathway name" value="PKR-mediated signaling"/>
</dbReference>
<dbReference type="SignaLink" id="Q6NZ36"/>
<dbReference type="BioGRID-ORCS" id="199990">
    <property type="hits" value="118 hits in 1130 CRISPR screens"/>
</dbReference>
<dbReference type="ChiTaRS" id="FAAP20">
    <property type="organism name" value="human"/>
</dbReference>
<dbReference type="EvolutionaryTrace" id="Q6NZ36"/>
<dbReference type="GenomeRNAi" id="199990"/>
<dbReference type="Pharos" id="Q6NZ36">
    <property type="development level" value="Tbio"/>
</dbReference>
<dbReference type="PRO" id="PR:Q6NZ36"/>
<dbReference type="Proteomes" id="UP000005640">
    <property type="component" value="Chromosome 1"/>
</dbReference>
<dbReference type="RNAct" id="Q6NZ36">
    <property type="molecule type" value="protein"/>
</dbReference>
<dbReference type="Bgee" id="ENSG00000162585">
    <property type="expression patterns" value="Expressed in adenohypophysis and 171 other cell types or tissues"/>
</dbReference>
<dbReference type="ExpressionAtlas" id="Q6NZ36">
    <property type="expression patterns" value="baseline and differential"/>
</dbReference>
<dbReference type="GO" id="GO:0030054">
    <property type="term" value="C:cell junction"/>
    <property type="evidence" value="ECO:0000314"/>
    <property type="project" value="HPA"/>
</dbReference>
<dbReference type="GO" id="GO:0000785">
    <property type="term" value="C:chromatin"/>
    <property type="evidence" value="ECO:0000314"/>
    <property type="project" value="ComplexPortal"/>
</dbReference>
<dbReference type="GO" id="GO:0005694">
    <property type="term" value="C:chromosome"/>
    <property type="evidence" value="ECO:0000314"/>
    <property type="project" value="UniProtKB"/>
</dbReference>
<dbReference type="GO" id="GO:0005829">
    <property type="term" value="C:cytosol"/>
    <property type="evidence" value="ECO:0000304"/>
    <property type="project" value="Reactome"/>
</dbReference>
<dbReference type="GO" id="GO:0043240">
    <property type="term" value="C:Fanconi anaemia nuclear complex"/>
    <property type="evidence" value="ECO:0000314"/>
    <property type="project" value="UniProtKB"/>
</dbReference>
<dbReference type="GO" id="GO:0016604">
    <property type="term" value="C:nuclear body"/>
    <property type="evidence" value="ECO:0000314"/>
    <property type="project" value="HPA"/>
</dbReference>
<dbReference type="GO" id="GO:0005654">
    <property type="term" value="C:nucleoplasm"/>
    <property type="evidence" value="ECO:0000314"/>
    <property type="project" value="HPA"/>
</dbReference>
<dbReference type="GO" id="GO:0070530">
    <property type="term" value="F:K63-linked polyubiquitin modification-dependent protein binding"/>
    <property type="evidence" value="ECO:0000314"/>
    <property type="project" value="UniProtKB"/>
</dbReference>
<dbReference type="GO" id="GO:0031593">
    <property type="term" value="F:polyubiquitin modification-dependent protein binding"/>
    <property type="evidence" value="ECO:0000314"/>
    <property type="project" value="UniProtKB"/>
</dbReference>
<dbReference type="GO" id="GO:0043130">
    <property type="term" value="F:ubiquitin binding"/>
    <property type="evidence" value="ECO:0007669"/>
    <property type="project" value="InterPro"/>
</dbReference>
<dbReference type="GO" id="GO:0140036">
    <property type="term" value="F:ubiquitin-modified protein reader activity"/>
    <property type="evidence" value="ECO:0000314"/>
    <property type="project" value="UniProtKB"/>
</dbReference>
<dbReference type="GO" id="GO:0008270">
    <property type="term" value="F:zinc ion binding"/>
    <property type="evidence" value="ECO:0007669"/>
    <property type="project" value="UniProtKB-KW"/>
</dbReference>
<dbReference type="GO" id="GO:0006974">
    <property type="term" value="P:DNA damage response"/>
    <property type="evidence" value="ECO:0000314"/>
    <property type="project" value="UniProtKB"/>
</dbReference>
<dbReference type="GO" id="GO:0036297">
    <property type="term" value="P:interstrand cross-link repair"/>
    <property type="evidence" value="ECO:0000315"/>
    <property type="project" value="UniProtKB"/>
</dbReference>
<dbReference type="GO" id="GO:0019985">
    <property type="term" value="P:translesion synthesis"/>
    <property type="evidence" value="ECO:0000315"/>
    <property type="project" value="UniProtKB"/>
</dbReference>
<dbReference type="InterPro" id="IPR052689">
    <property type="entry name" value="FA_core_complex_assoc"/>
</dbReference>
<dbReference type="InterPro" id="IPR031491">
    <property type="entry name" value="FANCA_interact"/>
</dbReference>
<dbReference type="InterPro" id="IPR031490">
    <property type="entry name" value="UBZ2_FAAP20"/>
</dbReference>
<dbReference type="PANTHER" id="PTHR37862">
    <property type="entry name" value="FANCONI ANEMIA CORE COMPLEX-ASSOCIATED PROTEIN 20"/>
    <property type="match status" value="1"/>
</dbReference>
<dbReference type="PANTHER" id="PTHR37862:SF1">
    <property type="entry name" value="FANCONI ANEMIA CORE COMPLEX-ASSOCIATED PROTEIN 20"/>
    <property type="match status" value="1"/>
</dbReference>
<dbReference type="Pfam" id="PF15751">
    <property type="entry name" value="FANCA_interact"/>
    <property type="match status" value="1"/>
</dbReference>
<dbReference type="Pfam" id="PF15750">
    <property type="entry name" value="UBZ_FAAP20"/>
    <property type="match status" value="1"/>
</dbReference>
<dbReference type="PROSITE" id="PS51906">
    <property type="entry name" value="ZF_UBZ2"/>
    <property type="match status" value="1"/>
</dbReference>
<accession>Q6NZ36</accession>
<accession>A6PW39</accession>
<accession>A6PW40</accession>
<accession>A6PW41</accession>
<accession>A8MQT6</accession>
<accession>F2Z2L4</accession>
<accession>Q6ZT64</accession>
<accession>Q71M24</accession>
<accession>Q96ND7</accession>
<name>FAP20_HUMAN</name>
<organism>
    <name type="scientific">Homo sapiens</name>
    <name type="common">Human</name>
    <dbReference type="NCBI Taxonomy" id="9606"/>
    <lineage>
        <taxon>Eukaryota</taxon>
        <taxon>Metazoa</taxon>
        <taxon>Chordata</taxon>
        <taxon>Craniata</taxon>
        <taxon>Vertebrata</taxon>
        <taxon>Euteleostomi</taxon>
        <taxon>Mammalia</taxon>
        <taxon>Eutheria</taxon>
        <taxon>Euarchontoglires</taxon>
        <taxon>Primates</taxon>
        <taxon>Haplorrhini</taxon>
        <taxon>Catarrhini</taxon>
        <taxon>Hominidae</taxon>
        <taxon>Homo</taxon>
    </lineage>
</organism>
<feature type="chain" id="PRO_0000316882" description="Fanconi anemia core complex-associated protein 20">
    <location>
        <begin position="1"/>
        <end position="180"/>
    </location>
</feature>
<feature type="zinc finger region" description="UBZ2-type" evidence="1">
    <location>
        <begin position="144"/>
        <end position="180"/>
    </location>
</feature>
<feature type="region of interest" description="Disordered" evidence="2">
    <location>
        <begin position="1"/>
        <end position="28"/>
    </location>
</feature>
<feature type="region of interest" description="Disordered" evidence="2">
    <location>
        <begin position="106"/>
        <end position="135"/>
    </location>
</feature>
<feature type="compositionally biased region" description="Basic residues" evidence="2">
    <location>
        <begin position="1"/>
        <end position="17"/>
    </location>
</feature>
<feature type="binding site" evidence="1">
    <location>
        <position position="147"/>
    </location>
    <ligand>
        <name>Zn(2+)</name>
        <dbReference type="ChEBI" id="CHEBI:29105"/>
    </ligand>
</feature>
<feature type="binding site" evidence="1">
    <location>
        <position position="150"/>
    </location>
    <ligand>
        <name>Zn(2+)</name>
        <dbReference type="ChEBI" id="CHEBI:29105"/>
    </ligand>
</feature>
<feature type="binding site" evidence="1">
    <location>
        <position position="166"/>
    </location>
    <ligand>
        <name>Zn(2+)</name>
        <dbReference type="ChEBI" id="CHEBI:29105"/>
    </ligand>
</feature>
<feature type="binding site" evidence="1">
    <location>
        <position position="170"/>
    </location>
    <ligand>
        <name>Zn(2+)</name>
        <dbReference type="ChEBI" id="CHEBI:29105"/>
    </ligand>
</feature>
<feature type="modified residue" description="Phosphoserine" evidence="16">
    <location>
        <position position="113"/>
    </location>
</feature>
<feature type="modified residue" description="Phosphoserine" evidence="16">
    <location>
        <position position="137"/>
    </location>
</feature>
<feature type="splice variant" id="VSP_030812" description="In isoform 2." evidence="7">
    <original>MEAARRPRLGLSRRRPRPAGG</original>
    <variation>MCGPEHLLCCPKDLAMFPRQLSLTACLPGTPVSHKCHHIWLWVGVPAWHPRASRCGGAQPSSWLRQKAARAFWLSLPAAKLRHHSSRWLRRSGAFSSGSTLKPPPSPSPAPLCHADNLRTGRTR</variation>
    <location>
        <begin position="1"/>
        <end position="21"/>
    </location>
</feature>
<feature type="splice variant" id="VSP_030813" description="In isoform 3." evidence="9">
    <original>MEAARRPRLGLSRRRPRPAGG</original>
    <variation>MNFGLEKTHFHCARVSPNQKLFSNKAKLRHHSSRWLRRSGAFSSGSTLKPPPSPSPAPLCHADNLRTGRTR</variation>
    <location>
        <begin position="1"/>
        <end position="21"/>
    </location>
</feature>
<feature type="splice variant" id="VSP_047264" description="In isoform 6." evidence="11">
    <original>PSGGRPWFLLGGDERERLWAELLRTVSPELILDHEVPSLPAFPGQEPRCGPEPTEVFTVGPKTFSWTPFPPDLWGPGRSYRLLHGAGGHLESPARSLPQRPAPDPCRAPRVEQQPSVEGAAALRSCPMCQKEFAPRLTQLDVDSHLAQCLAESTEDVTW</original>
    <variation>SPGAARSPLKSSLSDPRPFPGHPFRRTCGARAVPTGCFTGQEGTWNPPPGPCPSARHLIPAGPPGWSSSRLWRVPRPCAAAPCARRSSPPG</variation>
    <location>
        <begin position="22"/>
        <end position="180"/>
    </location>
</feature>
<feature type="splice variant" id="VSP_030814" description="In isoform 5." evidence="8">
    <original>L</original>
    <variation>YFNSRPHLCPAGS</variation>
    <location>
        <position position="158"/>
    </location>
</feature>
<feature type="splice variant" id="VSP_030815" description="In isoform 5." evidence="8">
    <location>
        <begin position="159"/>
        <end position="180"/>
    </location>
</feature>
<feature type="splice variant" id="VSP_030816" description="In isoform 4." evidence="7 8">
    <original>W</original>
    <variation>CLSWMCKTLNDPGSQG</variation>
    <location>
        <position position="180"/>
    </location>
</feature>
<feature type="sequence variant" id="VAR_038434" description="In dbSNP:rs1058411.">
    <original>P</original>
    <variation>S</variation>
    <location>
        <position position="126"/>
    </location>
</feature>
<feature type="mutagenesis site" description="Abolishes binding to ubiquitin. Abolishes binding to ubiquitin; when associated with A-150." evidence="3 5 6">
    <original>C</original>
    <variation>A</variation>
    <location>
        <position position="147"/>
    </location>
</feature>
<feature type="mutagenesis site" description="Abolishes binding to ubiquitin; when associated with A-147." evidence="3 5">
    <original>C</original>
    <variation>A</variation>
    <location>
        <position position="150"/>
    </location>
</feature>
<feature type="mutagenesis site" description="Abolishes binding to ubiquitin." evidence="6">
    <original>D</original>
    <variation>A</variation>
    <location>
        <position position="164"/>
    </location>
</feature>
<feature type="mutagenesis site" description="Abolishes binding to ubiquitin." evidence="4">
    <original>C</original>
    <variation>A</variation>
    <location>
        <position position="170"/>
    </location>
</feature>
<feature type="sequence conflict" description="In Ref. 5; AAH66360." evidence="11" ref="5">
    <original>M</original>
    <variation>V</variation>
    <location>
        <position position="1"/>
    </location>
</feature>
<feature type="sequence conflict" description="In Ref. 1; BAB70965, 4; EAW56125 and 5; AAH66360/AAI03993." evidence="11" ref="1 4 5">
    <original>R</original>
    <variation>P</variation>
    <location>
        <position position="17"/>
    </location>
</feature>
<feature type="sequence conflict" description="In Ref. 2; AAQ04817." evidence="11" ref="2">
    <original>S</original>
    <variation>N</variation>
    <location>
        <position position="146"/>
    </location>
</feature>
<feature type="sequence conflict" description="In Ref. 2; AAQ04817." evidence="11" ref="2">
    <original>ED</original>
    <variation>KN</variation>
    <location>
        <begin position="176"/>
        <end position="177"/>
    </location>
</feature>
<feature type="strand" evidence="17">
    <location>
        <begin position="145"/>
        <end position="147"/>
    </location>
</feature>
<feature type="turn" evidence="18">
    <location>
        <begin position="148"/>
        <end position="150"/>
    </location>
</feature>
<feature type="helix" evidence="18">
    <location>
        <begin position="160"/>
        <end position="173"/>
    </location>
</feature>
<feature type="strand" evidence="18">
    <location>
        <begin position="174"/>
        <end position="176"/>
    </location>
</feature>
<feature type="sequence conflict" description="In Ref. 1; BAC86730." evidence="11" ref="1">
    <original>R</original>
    <variation>H</variation>
    <location sequence="Q6NZ36-2">
        <position position="65"/>
    </location>
</feature>
<reference key="1">
    <citation type="journal article" date="2004" name="Nat. Genet.">
        <title>Complete sequencing and characterization of 21,243 full-length human cDNAs.</title>
        <authorList>
            <person name="Ota T."/>
            <person name="Suzuki Y."/>
            <person name="Nishikawa T."/>
            <person name="Otsuki T."/>
            <person name="Sugiyama T."/>
            <person name="Irie R."/>
            <person name="Wakamatsu A."/>
            <person name="Hayashi K."/>
            <person name="Sato H."/>
            <person name="Nagai K."/>
            <person name="Kimura K."/>
            <person name="Makita H."/>
            <person name="Sekine M."/>
            <person name="Obayashi M."/>
            <person name="Nishi T."/>
            <person name="Shibahara T."/>
            <person name="Tanaka T."/>
            <person name="Ishii S."/>
            <person name="Yamamoto J."/>
            <person name="Saito K."/>
            <person name="Kawai Y."/>
            <person name="Isono Y."/>
            <person name="Nakamura Y."/>
            <person name="Nagahari K."/>
            <person name="Murakami K."/>
            <person name="Yasuda T."/>
            <person name="Iwayanagi T."/>
            <person name="Wagatsuma M."/>
            <person name="Shiratori A."/>
            <person name="Sudo H."/>
            <person name="Hosoiri T."/>
            <person name="Kaku Y."/>
            <person name="Kodaira H."/>
            <person name="Kondo H."/>
            <person name="Sugawara M."/>
            <person name="Takahashi M."/>
            <person name="Kanda K."/>
            <person name="Yokoi T."/>
            <person name="Furuya T."/>
            <person name="Kikkawa E."/>
            <person name="Omura Y."/>
            <person name="Abe K."/>
            <person name="Kamihara K."/>
            <person name="Katsuta N."/>
            <person name="Sato K."/>
            <person name="Tanikawa M."/>
            <person name="Yamazaki M."/>
            <person name="Ninomiya K."/>
            <person name="Ishibashi T."/>
            <person name="Yamashita H."/>
            <person name="Murakawa K."/>
            <person name="Fujimori K."/>
            <person name="Tanai H."/>
            <person name="Kimata M."/>
            <person name="Watanabe M."/>
            <person name="Hiraoka S."/>
            <person name="Chiba Y."/>
            <person name="Ishida S."/>
            <person name="Ono Y."/>
            <person name="Takiguchi S."/>
            <person name="Watanabe S."/>
            <person name="Yosida M."/>
            <person name="Hotuta T."/>
            <person name="Kusano J."/>
            <person name="Kanehori K."/>
            <person name="Takahashi-Fujii A."/>
            <person name="Hara H."/>
            <person name="Tanase T.-O."/>
            <person name="Nomura Y."/>
            <person name="Togiya S."/>
            <person name="Komai F."/>
            <person name="Hara R."/>
            <person name="Takeuchi K."/>
            <person name="Arita M."/>
            <person name="Imose N."/>
            <person name="Musashino K."/>
            <person name="Yuuki H."/>
            <person name="Oshima A."/>
            <person name="Sasaki N."/>
            <person name="Aotsuka S."/>
            <person name="Yoshikawa Y."/>
            <person name="Matsunawa H."/>
            <person name="Ichihara T."/>
            <person name="Shiohata N."/>
            <person name="Sano S."/>
            <person name="Moriya S."/>
            <person name="Momiyama H."/>
            <person name="Satoh N."/>
            <person name="Takami S."/>
            <person name="Terashima Y."/>
            <person name="Suzuki O."/>
            <person name="Nakagawa S."/>
            <person name="Senoh A."/>
            <person name="Mizoguchi H."/>
            <person name="Goto Y."/>
            <person name="Shimizu F."/>
            <person name="Wakebe H."/>
            <person name="Hishigaki H."/>
            <person name="Watanabe T."/>
            <person name="Sugiyama A."/>
            <person name="Takemoto M."/>
            <person name="Kawakami B."/>
            <person name="Yamazaki M."/>
            <person name="Watanabe K."/>
            <person name="Kumagai A."/>
            <person name="Itakura S."/>
            <person name="Fukuzumi Y."/>
            <person name="Fujimori Y."/>
            <person name="Komiyama M."/>
            <person name="Tashiro H."/>
            <person name="Tanigami A."/>
            <person name="Fujiwara T."/>
            <person name="Ono T."/>
            <person name="Yamada K."/>
            <person name="Fujii Y."/>
            <person name="Ozaki K."/>
            <person name="Hirao M."/>
            <person name="Ohmori Y."/>
            <person name="Kawabata A."/>
            <person name="Hikiji T."/>
            <person name="Kobatake N."/>
            <person name="Inagaki H."/>
            <person name="Ikema Y."/>
            <person name="Okamoto S."/>
            <person name="Okitani R."/>
            <person name="Kawakami T."/>
            <person name="Noguchi S."/>
            <person name="Itoh T."/>
            <person name="Shigeta K."/>
            <person name="Senba T."/>
            <person name="Matsumura K."/>
            <person name="Nakajima Y."/>
            <person name="Mizuno T."/>
            <person name="Morinaga M."/>
            <person name="Sasaki M."/>
            <person name="Togashi T."/>
            <person name="Oyama M."/>
            <person name="Hata H."/>
            <person name="Watanabe M."/>
            <person name="Komatsu T."/>
            <person name="Mizushima-Sugano J."/>
            <person name="Satoh T."/>
            <person name="Shirai Y."/>
            <person name="Takahashi Y."/>
            <person name="Nakagawa K."/>
            <person name="Okumura K."/>
            <person name="Nagase T."/>
            <person name="Nomura N."/>
            <person name="Kikuchi H."/>
            <person name="Masuho Y."/>
            <person name="Yamashita R."/>
            <person name="Nakai K."/>
            <person name="Yada T."/>
            <person name="Nakamura Y."/>
            <person name="Ohara O."/>
            <person name="Isogai T."/>
            <person name="Sugano S."/>
        </authorList>
    </citation>
    <scope>NUCLEOTIDE SEQUENCE [LARGE SCALE MRNA] (ISOFORMS 2 AND 4)</scope>
    <source>
        <tissue>Amygdala</tissue>
        <tissue>Synovial cell</tissue>
    </source>
</reference>
<reference key="2">
    <citation type="journal article" date="2004" name="Proc. Natl. Acad. Sci. U.S.A.">
        <title>Large-scale cDNA transfection screening for genes related to cancer development and progression.</title>
        <authorList>
            <person name="Wan D."/>
            <person name="Gong Y."/>
            <person name="Qin W."/>
            <person name="Zhang P."/>
            <person name="Li J."/>
            <person name="Wei L."/>
            <person name="Zhou X."/>
            <person name="Li H."/>
            <person name="Qiu X."/>
            <person name="Zhong F."/>
            <person name="He L."/>
            <person name="Yu J."/>
            <person name="Yao G."/>
            <person name="Jiang H."/>
            <person name="Qian L."/>
            <person name="Yu Y."/>
            <person name="Shu H."/>
            <person name="Chen X."/>
            <person name="Xu H."/>
            <person name="Guo M."/>
            <person name="Pan Z."/>
            <person name="Chen Y."/>
            <person name="Ge C."/>
            <person name="Yang S."/>
            <person name="Gu J."/>
        </authorList>
    </citation>
    <scope>NUCLEOTIDE SEQUENCE [LARGE SCALE MRNA] (ISOFORM 3)</scope>
</reference>
<reference key="3">
    <citation type="journal article" date="2006" name="Nature">
        <title>The DNA sequence and biological annotation of human chromosome 1.</title>
        <authorList>
            <person name="Gregory S.G."/>
            <person name="Barlow K.F."/>
            <person name="McLay K.E."/>
            <person name="Kaul R."/>
            <person name="Swarbreck D."/>
            <person name="Dunham A."/>
            <person name="Scott C.E."/>
            <person name="Howe K.L."/>
            <person name="Woodfine K."/>
            <person name="Spencer C.C.A."/>
            <person name="Jones M.C."/>
            <person name="Gillson C."/>
            <person name="Searle S."/>
            <person name="Zhou Y."/>
            <person name="Kokocinski F."/>
            <person name="McDonald L."/>
            <person name="Evans R."/>
            <person name="Phillips K."/>
            <person name="Atkinson A."/>
            <person name="Cooper R."/>
            <person name="Jones C."/>
            <person name="Hall R.E."/>
            <person name="Andrews T.D."/>
            <person name="Lloyd C."/>
            <person name="Ainscough R."/>
            <person name="Almeida J.P."/>
            <person name="Ambrose K.D."/>
            <person name="Anderson F."/>
            <person name="Andrew R.W."/>
            <person name="Ashwell R.I.S."/>
            <person name="Aubin K."/>
            <person name="Babbage A.K."/>
            <person name="Bagguley C.L."/>
            <person name="Bailey J."/>
            <person name="Beasley H."/>
            <person name="Bethel G."/>
            <person name="Bird C.P."/>
            <person name="Bray-Allen S."/>
            <person name="Brown J.Y."/>
            <person name="Brown A.J."/>
            <person name="Buckley D."/>
            <person name="Burton J."/>
            <person name="Bye J."/>
            <person name="Carder C."/>
            <person name="Chapman J.C."/>
            <person name="Clark S.Y."/>
            <person name="Clarke G."/>
            <person name="Clee C."/>
            <person name="Cobley V."/>
            <person name="Collier R.E."/>
            <person name="Corby N."/>
            <person name="Coville G.J."/>
            <person name="Davies J."/>
            <person name="Deadman R."/>
            <person name="Dunn M."/>
            <person name="Earthrowl M."/>
            <person name="Ellington A.G."/>
            <person name="Errington H."/>
            <person name="Frankish A."/>
            <person name="Frankland J."/>
            <person name="French L."/>
            <person name="Garner P."/>
            <person name="Garnett J."/>
            <person name="Gay L."/>
            <person name="Ghori M.R.J."/>
            <person name="Gibson R."/>
            <person name="Gilby L.M."/>
            <person name="Gillett W."/>
            <person name="Glithero R.J."/>
            <person name="Grafham D.V."/>
            <person name="Griffiths C."/>
            <person name="Griffiths-Jones S."/>
            <person name="Grocock R."/>
            <person name="Hammond S."/>
            <person name="Harrison E.S.I."/>
            <person name="Hart E."/>
            <person name="Haugen E."/>
            <person name="Heath P.D."/>
            <person name="Holmes S."/>
            <person name="Holt K."/>
            <person name="Howden P.J."/>
            <person name="Hunt A.R."/>
            <person name="Hunt S.E."/>
            <person name="Hunter G."/>
            <person name="Isherwood J."/>
            <person name="James R."/>
            <person name="Johnson C."/>
            <person name="Johnson D."/>
            <person name="Joy A."/>
            <person name="Kay M."/>
            <person name="Kershaw J.K."/>
            <person name="Kibukawa M."/>
            <person name="Kimberley A.M."/>
            <person name="King A."/>
            <person name="Knights A.J."/>
            <person name="Lad H."/>
            <person name="Laird G."/>
            <person name="Lawlor S."/>
            <person name="Leongamornlert D.A."/>
            <person name="Lloyd D.M."/>
            <person name="Loveland J."/>
            <person name="Lovell J."/>
            <person name="Lush M.J."/>
            <person name="Lyne R."/>
            <person name="Martin S."/>
            <person name="Mashreghi-Mohammadi M."/>
            <person name="Matthews L."/>
            <person name="Matthews N.S.W."/>
            <person name="McLaren S."/>
            <person name="Milne S."/>
            <person name="Mistry S."/>
            <person name="Moore M.J.F."/>
            <person name="Nickerson T."/>
            <person name="O'Dell C.N."/>
            <person name="Oliver K."/>
            <person name="Palmeiri A."/>
            <person name="Palmer S.A."/>
            <person name="Parker A."/>
            <person name="Patel D."/>
            <person name="Pearce A.V."/>
            <person name="Peck A.I."/>
            <person name="Pelan S."/>
            <person name="Phelps K."/>
            <person name="Phillimore B.J."/>
            <person name="Plumb R."/>
            <person name="Rajan J."/>
            <person name="Raymond C."/>
            <person name="Rouse G."/>
            <person name="Saenphimmachak C."/>
            <person name="Sehra H.K."/>
            <person name="Sheridan E."/>
            <person name="Shownkeen R."/>
            <person name="Sims S."/>
            <person name="Skuce C.D."/>
            <person name="Smith M."/>
            <person name="Steward C."/>
            <person name="Subramanian S."/>
            <person name="Sycamore N."/>
            <person name="Tracey A."/>
            <person name="Tromans A."/>
            <person name="Van Helmond Z."/>
            <person name="Wall M."/>
            <person name="Wallis J.M."/>
            <person name="White S."/>
            <person name="Whitehead S.L."/>
            <person name="Wilkinson J.E."/>
            <person name="Willey D.L."/>
            <person name="Williams H."/>
            <person name="Wilming L."/>
            <person name="Wray P.W."/>
            <person name="Wu Z."/>
            <person name="Coulson A."/>
            <person name="Vaudin M."/>
            <person name="Sulston J.E."/>
            <person name="Durbin R.M."/>
            <person name="Hubbard T."/>
            <person name="Wooster R."/>
            <person name="Dunham I."/>
            <person name="Carter N.P."/>
            <person name="McVean G."/>
            <person name="Ross M.T."/>
            <person name="Harrow J."/>
            <person name="Olson M.V."/>
            <person name="Beck S."/>
            <person name="Rogers J."/>
            <person name="Bentley D.R."/>
        </authorList>
    </citation>
    <scope>NUCLEOTIDE SEQUENCE [LARGE SCALE GENOMIC DNA]</scope>
</reference>
<reference key="4">
    <citation type="submission" date="2005-07" db="EMBL/GenBank/DDBJ databases">
        <authorList>
            <person name="Mural R.J."/>
            <person name="Istrail S."/>
            <person name="Sutton G.G."/>
            <person name="Florea L."/>
            <person name="Halpern A.L."/>
            <person name="Mobarry C.M."/>
            <person name="Lippert R."/>
            <person name="Walenz B."/>
            <person name="Shatkay H."/>
            <person name="Dew I."/>
            <person name="Miller J.R."/>
            <person name="Flanigan M.J."/>
            <person name="Edwards N.J."/>
            <person name="Bolanos R."/>
            <person name="Fasulo D."/>
            <person name="Halldorsson B.V."/>
            <person name="Hannenhalli S."/>
            <person name="Turner R."/>
            <person name="Yooseph S."/>
            <person name="Lu F."/>
            <person name="Nusskern D.R."/>
            <person name="Shue B.C."/>
            <person name="Zheng X.H."/>
            <person name="Zhong F."/>
            <person name="Delcher A.L."/>
            <person name="Huson D.H."/>
            <person name="Kravitz S.A."/>
            <person name="Mouchard L."/>
            <person name="Reinert K."/>
            <person name="Remington K.A."/>
            <person name="Clark A.G."/>
            <person name="Waterman M.S."/>
            <person name="Eichler E.E."/>
            <person name="Adams M.D."/>
            <person name="Hunkapiller M.W."/>
            <person name="Myers E.W."/>
            <person name="Venter J.C."/>
        </authorList>
    </citation>
    <scope>NUCLEOTIDE SEQUENCE [LARGE SCALE GENOMIC DNA]</scope>
</reference>
<reference key="5">
    <citation type="journal article" date="2004" name="Genome Res.">
        <title>The status, quality, and expansion of the NIH full-length cDNA project: the Mammalian Gene Collection (MGC).</title>
        <authorList>
            <consortium name="The MGC Project Team"/>
        </authorList>
    </citation>
    <scope>NUCLEOTIDE SEQUENCE [LARGE SCALE MRNA] (ISOFORMS 1 AND 4)</scope>
    <scope>NUCLEOTIDE SEQUENCE [LARGE SCALE MRNA] OF 152-180 (ISOFORM 5)</scope>
    <source>
        <tissue>Hypothalamus</tissue>
    </source>
</reference>
<reference key="6">
    <citation type="journal article" date="2012" name="Blood">
        <title>FAAP20: a novel ubiquitin-binding FA nuclear core-complex protein required for functional integrity of the FA-BRCA DNA repair pathway.</title>
        <authorList>
            <person name="Ali A.M."/>
            <person name="Pradhan A."/>
            <person name="Singh T.R."/>
            <person name="Du C."/>
            <person name="Li J."/>
            <person name="Wahengbam K."/>
            <person name="Grassman E."/>
            <person name="Auerbach A.D."/>
            <person name="Pang Q."/>
            <person name="Meetei A.R."/>
        </authorList>
    </citation>
    <scope>FUNCTION</scope>
    <scope>IDENTIFICATION IN THE FA COMPLEX</scope>
    <scope>SUBCELLULAR LOCATION</scope>
    <scope>DOMAIN</scope>
    <scope>INTERACTION WITH FANCA</scope>
    <scope>MUTAGENESIS OF CYS-170</scope>
</reference>
<reference key="7">
    <citation type="journal article" date="2012" name="Mol. Cell">
        <title>A ubiquitin-binding protein, FAAP20, links RNF8-mediated ubiquitination to the Fanconi anemia DNA repair network.</title>
        <authorList>
            <person name="Yan Z."/>
            <person name="Guo R."/>
            <person name="Paramasivam M."/>
            <person name="Shen W."/>
            <person name="Ling C."/>
            <person name="Fox D. III"/>
            <person name="Wang Y."/>
            <person name="Oostra A.B."/>
            <person name="Kuehl J."/>
            <person name="Lee D.Y."/>
            <person name="Takata M."/>
            <person name="Hoatlin M.E."/>
            <person name="Schindler D."/>
            <person name="Joenje H."/>
            <person name="de Winter J.P."/>
            <person name="Li L."/>
            <person name="Seidman M.M."/>
            <person name="Wang W."/>
        </authorList>
    </citation>
    <scope>FUNCTION</scope>
    <scope>IDENTIFICATION IN THE FA COMPLEX</scope>
    <scope>SUBCELLULAR LOCATION</scope>
    <scope>DOMAIN</scope>
    <scope>INTERACTION WITH FANCA</scope>
    <scope>MUTAGENESIS OF CYS-147 AND ASP-164</scope>
</reference>
<reference key="8">
    <citation type="journal article" date="2012" name="Nat. Struct. Mol. Biol.">
        <title>Regulation of Rev1 by the Fanconi anemia core complex.</title>
        <authorList>
            <person name="Kim H."/>
            <person name="Yang K."/>
            <person name="Dejsuphong D."/>
            <person name="D'Andrea A.D."/>
        </authorList>
    </citation>
    <scope>FUNCTION</scope>
    <scope>IDENTIFICATION IN THE FA COMPLEX</scope>
    <scope>DOMAIN</scope>
    <scope>INTERACTION WITH REV1</scope>
    <scope>MUTAGENESIS OF CYS-147 AND CYS-150</scope>
</reference>
<reference key="9">
    <citation type="journal article" date="2012" name="Proc. Natl. Acad. Sci. U.S.A.">
        <title>Fanconi anemia (FA) binding protein FAAP20 stabilizes FA complementation group A (FANCA) and participates in interstrand cross-link repair.</title>
        <authorList>
            <person name="Leung J.W."/>
            <person name="Wang Y."/>
            <person name="Fong K.W."/>
            <person name="Huen M.S."/>
            <person name="Li L."/>
            <person name="Chen J."/>
        </authorList>
    </citation>
    <scope>FUNCTION</scope>
    <scope>IDENTIFICATION IN THE FA COMPLEX</scope>
    <scope>DOMAIN</scope>
    <scope>INTERACTION WITH FANCA</scope>
    <scope>MUTAGENESIS OF CYS-147 AND CYS-150</scope>
</reference>
<reference key="10">
    <citation type="journal article" date="2013" name="J. Proteome Res.">
        <title>Toward a comprehensive characterization of a human cancer cell phosphoproteome.</title>
        <authorList>
            <person name="Zhou H."/>
            <person name="Di Palma S."/>
            <person name="Preisinger C."/>
            <person name="Peng M."/>
            <person name="Polat A.N."/>
            <person name="Heck A.J."/>
            <person name="Mohammed S."/>
        </authorList>
    </citation>
    <scope>PHOSPHORYLATION [LARGE SCALE ANALYSIS] AT SER-113 AND SER-137</scope>
    <scope>IDENTIFICATION BY MASS SPECTROMETRY [LARGE SCALE ANALYSIS]</scope>
    <source>
        <tissue>Cervix carcinoma</tissue>
        <tissue>Erythroleukemia</tissue>
    </source>
</reference>
<proteinExistence type="evidence at protein level"/>
<comment type="function">
    <text evidence="3 4 5 6">Component of the Fanconi anemia (FA) complex required to recruit the FA complex to DNA interstrand cross-links (ICLs) and promote ICLs repair. Following DNA damage recognizes and binds 'Lys-63'-linked ubiquitin generated by RNF8 at ICLs and recruits other components of the FA complex. Promotes translesion synthesis via interaction with REV1.</text>
</comment>
<comment type="subunit">
    <text evidence="3 4 5 6">Component of the Fanconi anemia (FA) complex. Interacts with FANCA; interaction is direct. Interacts with REV1. Reported to bind monoubiquitinated REV1; however it binds better to non-ubiquitinated REV1 (PubMed:22266823).</text>
</comment>
<comment type="interaction">
    <interactant intactId="EBI-2817693">
        <id>Q6NZ36</id>
    </interactant>
    <interactant intactId="EBI-7353917">
        <id>Q9UBZ9</id>
        <label>REV1</label>
    </interactant>
    <organismsDiffer>false</organismsDiffer>
    <experiments>2</experiments>
</comment>
<comment type="interaction">
    <interactant intactId="EBI-15965017">
        <id>Q6NZ36-1</id>
    </interactant>
    <interactant intactId="EBI-81570">
        <id>O15360</id>
        <label>FANCA</label>
    </interactant>
    <organismsDiffer>false</organismsDiffer>
    <experiments>5</experiments>
</comment>
<comment type="interaction">
    <interactant intactId="EBI-15965017">
        <id>Q6NZ36-1</id>
    </interactant>
    <interactant intactId="EBI-2114764">
        <id>Q920Q2</id>
        <label>Rev1</label>
    </interactant>
    <organismsDiffer>true</organismsDiffer>
    <experiments>7</experiments>
</comment>
<comment type="interaction">
    <interactant intactId="EBI-12013806">
        <id>Q6NZ36-4</id>
    </interactant>
    <interactant intactId="EBI-765971">
        <id>Q9HBZ2</id>
        <label>ARNT2</label>
    </interactant>
    <organismsDiffer>false</organismsDiffer>
    <experiments>3</experiments>
</comment>
<comment type="interaction">
    <interactant intactId="EBI-12013806">
        <id>Q6NZ36-4</id>
    </interactant>
    <interactant intactId="EBI-11954292">
        <id>Q86V38</id>
        <label>ATN1</label>
    </interactant>
    <organismsDiffer>false</organismsDiffer>
    <experiments>3</experiments>
</comment>
<comment type="interaction">
    <interactant intactId="EBI-12013806">
        <id>Q6NZ36-4</id>
    </interactant>
    <interactant intactId="EBI-953896">
        <id>Q9NP55</id>
        <label>BPIFA1</label>
    </interactant>
    <organismsDiffer>false</organismsDiffer>
    <experiments>3</experiments>
</comment>
<comment type="interaction">
    <interactant intactId="EBI-12013806">
        <id>Q6NZ36-4</id>
    </interactant>
    <interactant intactId="EBI-748171">
        <id>O43186</id>
        <label>CRX</label>
    </interactant>
    <organismsDiffer>false</organismsDiffer>
    <experiments>3</experiments>
</comment>
<comment type="interaction">
    <interactant intactId="EBI-12013806">
        <id>Q6NZ36-4</id>
    </interactant>
    <interactant intactId="EBI-6875961">
        <id>P02489</id>
        <label>CRYAA</label>
    </interactant>
    <organismsDiffer>false</organismsDiffer>
    <experiments>3</experiments>
</comment>
<comment type="interaction">
    <interactant intactId="EBI-12013806">
        <id>Q6NZ36-4</id>
    </interactant>
    <interactant intactId="EBI-6873363">
        <id>Q8WUE5</id>
        <label>CT55</label>
    </interactant>
    <organismsDiffer>false</organismsDiffer>
    <experiments>3</experiments>
</comment>
<comment type="interaction">
    <interactant intactId="EBI-12013806">
        <id>Q6NZ36-4</id>
    </interactant>
    <interactant intactId="EBI-751587">
        <id>Q9GZU7</id>
        <label>CTDSP1</label>
    </interactant>
    <organismsDiffer>false</organismsDiffer>
    <experiments>3</experiments>
</comment>
<comment type="interaction">
    <interactant intactId="EBI-12013806">
        <id>Q6NZ36-4</id>
    </interactant>
    <interactant intactId="EBI-742054">
        <id>Q96D03</id>
        <label>DDIT4L</label>
    </interactant>
    <organismsDiffer>false</organismsDiffer>
    <experiments>3</experiments>
</comment>
<comment type="interaction">
    <interactant intactId="EBI-12013806">
        <id>Q6NZ36-4</id>
    </interactant>
    <interactant intactId="EBI-7357329">
        <id>Q9H596</id>
        <label>DUSP21</label>
    </interactant>
    <organismsDiffer>false</organismsDiffer>
    <experiments>3</experiments>
</comment>
<comment type="interaction">
    <interactant intactId="EBI-12013806">
        <id>Q6NZ36-4</id>
    </interactant>
    <interactant intactId="EBI-25913156">
        <id>O14908-2</id>
        <label>GIPC1</label>
    </interactant>
    <organismsDiffer>false</organismsDiffer>
    <experiments>3</experiments>
</comment>
<comment type="interaction">
    <interactant intactId="EBI-12013806">
        <id>Q6NZ36-4</id>
    </interactant>
    <interactant intactId="EBI-5916454">
        <id>A6NEM1</id>
        <label>GOLGA6L9</label>
    </interactant>
    <organismsDiffer>false</organismsDiffer>
    <experiments>3</experiments>
</comment>
<comment type="interaction">
    <interactant intactId="EBI-12013806">
        <id>Q6NZ36-4</id>
    </interactant>
    <interactant intactId="EBI-6509505">
        <id>Q0VD86</id>
        <label>INCA1</label>
    </interactant>
    <organismsDiffer>false</organismsDiffer>
    <experiments>3</experiments>
</comment>
<comment type="interaction">
    <interactant intactId="EBI-12013806">
        <id>Q6NZ36-4</id>
    </interactant>
    <interactant intactId="EBI-2432309">
        <id>Q92876</id>
        <label>KLK6</label>
    </interactant>
    <organismsDiffer>false</organismsDiffer>
    <experiments>3</experiments>
</comment>
<comment type="interaction">
    <interactant intactId="EBI-12013806">
        <id>Q6NZ36-4</id>
    </interactant>
    <interactant intactId="EBI-11962084">
        <id>Q3LI66</id>
        <label>KRTAP6-2</label>
    </interactant>
    <organismsDiffer>false</organismsDiffer>
    <experiments>3</experiments>
</comment>
<comment type="interaction">
    <interactant intactId="EBI-12013806">
        <id>Q6NZ36-4</id>
    </interactant>
    <interactant intactId="EBI-10261141">
        <id>Q8IUC2</id>
        <label>KRTAP8-1</label>
    </interactant>
    <organismsDiffer>false</organismsDiffer>
    <experiments>3</experiments>
</comment>
<comment type="interaction">
    <interactant intactId="EBI-12013806">
        <id>Q6NZ36-4</id>
    </interactant>
    <interactant intactId="EBI-11911016">
        <id>P80188</id>
        <label>LCN2</label>
    </interactant>
    <organismsDiffer>false</organismsDiffer>
    <experiments>3</experiments>
</comment>
<comment type="interaction">
    <interactant intactId="EBI-12013806">
        <id>Q6NZ36-4</id>
    </interactant>
    <interactant intactId="EBI-11959475">
        <id>P25791-3</id>
        <label>LMO2</label>
    </interactant>
    <organismsDiffer>false</organismsDiffer>
    <experiments>3</experiments>
</comment>
<comment type="interaction">
    <interactant intactId="EBI-12013806">
        <id>Q6NZ36-4</id>
    </interactant>
    <interactant intactId="EBI-18273118">
        <id>Q9P2M1</id>
        <label>LRP2BP</label>
    </interactant>
    <organismsDiffer>false</organismsDiffer>
    <experiments>3</experiments>
</comment>
<comment type="interaction">
    <interactant intactId="EBI-12013806">
        <id>Q6NZ36-4</id>
    </interactant>
    <interactant intactId="EBI-16439278">
        <id>Q6FHY5</id>
        <label>MEOX2</label>
    </interactant>
    <organismsDiffer>false</organismsDiffer>
    <experiments>3</experiments>
</comment>
<comment type="interaction">
    <interactant intactId="EBI-12013806">
        <id>Q6NZ36-4</id>
    </interactant>
    <interactant intactId="EBI-2558739">
        <id>Q70IA6</id>
        <label>MOB2</label>
    </interactant>
    <organismsDiffer>false</organismsDiffer>
    <experiments>3</experiments>
</comment>
<comment type="interaction">
    <interactant intactId="EBI-12013806">
        <id>Q6NZ36-4</id>
    </interactant>
    <interactant intactId="EBI-10271199">
        <id>Q8NI38</id>
        <label>NFKBID</label>
    </interactant>
    <organismsDiffer>false</organismsDiffer>
    <experiments>6</experiments>
</comment>
<comment type="interaction">
    <interactant intactId="EBI-12013806">
        <id>Q6NZ36-4</id>
    </interactant>
    <interactant intactId="EBI-1307">
        <id>Q13153</id>
        <label>PAK1</label>
    </interactant>
    <organismsDiffer>false</organismsDiffer>
    <experiments>3</experiments>
</comment>
<comment type="interaction">
    <interactant intactId="EBI-12013806">
        <id>Q6NZ36-4</id>
    </interactant>
    <interactant intactId="EBI-357275">
        <id>Q99471</id>
        <label>PFDN5</label>
    </interactant>
    <organismsDiffer>false</organismsDiffer>
    <experiments>3</experiments>
</comment>
<comment type="interaction">
    <interactant intactId="EBI-12013806">
        <id>Q6NZ36-4</id>
    </interactant>
    <interactant intactId="EBI-12859340">
        <id>Q9NQX1-2</id>
        <label>PRDM5</label>
    </interactant>
    <organismsDiffer>false</organismsDiffer>
    <experiments>3</experiments>
</comment>
<comment type="interaction">
    <interactant intactId="EBI-12013806">
        <id>Q6NZ36-4</id>
    </interactant>
    <interactant intactId="EBI-10829018">
        <id>Q04864-2</id>
        <label>REL</label>
    </interactant>
    <organismsDiffer>false</organismsDiffer>
    <experiments>3</experiments>
</comment>
<comment type="interaction">
    <interactant intactId="EBI-12013806">
        <id>Q6NZ36-4</id>
    </interactant>
    <interactant intactId="EBI-748601">
        <id>Q9UHV2</id>
        <label>SERTAD1</label>
    </interactant>
    <organismsDiffer>false</organismsDiffer>
    <experiments>3</experiments>
</comment>
<comment type="interaction">
    <interactant intactId="EBI-12013806">
        <id>Q6NZ36-4</id>
    </interactant>
    <interactant intactId="EBI-748621">
        <id>Q9UJW9</id>
        <label>SERTAD3</label>
    </interactant>
    <organismsDiffer>false</organismsDiffer>
    <experiments>3</experiments>
</comment>
<comment type="interaction">
    <interactant intactId="EBI-12013806">
        <id>Q6NZ36-4</id>
    </interactant>
    <interactant intactId="EBI-11523345">
        <id>Q8IYF3-3</id>
        <label>TEX11</label>
    </interactant>
    <organismsDiffer>false</organismsDiffer>
    <experiments>3</experiments>
</comment>
<comment type="interaction">
    <interactant intactId="EBI-12013806">
        <id>Q6NZ36-4</id>
    </interactant>
    <interactant intactId="EBI-492476">
        <id>Q96RU7</id>
        <label>TRIB3</label>
    </interactant>
    <organismsDiffer>false</organismsDiffer>
    <experiments>3</experiments>
</comment>
<comment type="subcellular location">
    <subcellularLocation>
        <location evidence="4 6">Nucleus</location>
    </subcellularLocation>
    <subcellularLocation>
        <location evidence="12 14">Chromosome</location>
    </subcellularLocation>
    <text evidence="6">Following DNA damage, recruited to DNA interstrand cross-links (ICLs) sites by binding to ubiquitin generated by RNF8.</text>
</comment>
<comment type="alternative products">
    <event type="alternative splicing"/>
    <isoform>
        <id>Q6NZ36-1</id>
        <name>1</name>
        <sequence type="displayed"/>
    </isoform>
    <isoform>
        <id>Q6NZ36-2</id>
        <name>2</name>
        <sequence type="described" ref="VSP_030812"/>
    </isoform>
    <isoform>
        <id>Q6NZ36-3</id>
        <name>3</name>
        <sequence type="described" ref="VSP_030813"/>
    </isoform>
    <isoform>
        <id>Q6NZ36-4</id>
        <name>4</name>
        <sequence type="described" ref="VSP_030816"/>
    </isoform>
    <isoform>
        <id>Q6NZ36-5</id>
        <name>5</name>
        <sequence type="described" ref="VSP_030814 VSP_030815"/>
    </isoform>
    <isoform>
        <id>Q6NZ36-6</id>
        <name>6</name>
        <sequence type="described" ref="VSP_047264"/>
    </isoform>
</comment>
<comment type="domain">
    <text evidence="1 3 4 5 6">The UBZ2-type zinc finger binds both 'Lys-48'- and 'Lys-63'-linked polyubiquitin with preference for 'Lys-63'-linked polyubiquitin.</text>
</comment>
<comment type="miscellaneous">
    <molecule>Isoform 4</molecule>
    <text evidence="11">May be produced at very low levels due to a premature stop codon in the mRNA, leading to nonsense-mediated mRNA decay.</text>
</comment>
<comment type="caution">
    <text evidence="13">According to a report, ubiquitin-binding is dispensable for function (PubMed:22396592). However, such data are not confirmed by PubMed:22705371.</text>
</comment>
<comment type="sequence caution" evidence="11">
    <conflict type="erroneous initiation">
        <sequence resource="EMBL-CDS" id="AAH66360"/>
    </conflict>
    <text>Extended N-terminus.</text>
</comment>
<protein>
    <recommendedName>
        <fullName evidence="15">Fanconi anemia core complex-associated protein 20</fullName>
    </recommendedName>
    <alternativeName>
        <fullName evidence="10">FANCA-associated protein of 20 kDa</fullName>
    </alternativeName>
    <alternativeName>
        <fullName evidence="10">Fanconi anemia-associated protein of 20 kDa</fullName>
    </alternativeName>
</protein>